<feature type="initiator methionine" description="Removed" evidence="2">
    <location>
        <position position="1"/>
    </location>
</feature>
<feature type="chain" id="PRO_0000240136" description="Large ribosomal subunit protein P1">
    <location>
        <begin position="2"/>
        <end position="114"/>
    </location>
</feature>
<feature type="region of interest" description="Disordered" evidence="3">
    <location>
        <begin position="69"/>
        <end position="114"/>
    </location>
</feature>
<feature type="compositionally biased region" description="Low complexity" evidence="3">
    <location>
        <begin position="69"/>
        <end position="88"/>
    </location>
</feature>
<feature type="compositionally biased region" description="Basic and acidic residues" evidence="3">
    <location>
        <begin position="89"/>
        <end position="100"/>
    </location>
</feature>
<feature type="modified residue" description="N-acetylalanine" evidence="2">
    <location>
        <position position="2"/>
    </location>
</feature>
<feature type="modified residue" description="Phosphoserine" evidence="2">
    <location>
        <position position="101"/>
    </location>
</feature>
<feature type="cross-link" description="Glycyl lysine isopeptide (Lys-Gly) (interchain with G-Cter in ubiquitin)" evidence="2">
    <location>
        <position position="92"/>
    </location>
</feature>
<feature type="cross-link" description="Glycyl lysine isopeptide (Lys-Gly) (interchain with G-Cter in ubiquitin)" evidence="2">
    <location>
        <position position="93"/>
    </location>
</feature>
<reference key="1">
    <citation type="submission" date="2005-01" db="EMBL/GenBank/DDBJ databases">
        <title>Analysis of sequences obtained from constructed full-length bovine cDNA libraries.</title>
        <authorList>
            <person name="Yu J."/>
            <person name="Meng Y."/>
            <person name="Wang Z."/>
            <person name="Hansen C."/>
            <person name="Li C."/>
            <person name="Moore S.S."/>
        </authorList>
    </citation>
    <scope>NUCLEOTIDE SEQUENCE [LARGE SCALE MRNA]</scope>
    <source>
        <tissue>Lymphoid epithelium</tissue>
    </source>
</reference>
<reference key="2">
    <citation type="submission" date="2005-08" db="EMBL/GenBank/DDBJ databases">
        <authorList>
            <consortium name="NIH - Mammalian Gene Collection (MGC) project"/>
        </authorList>
    </citation>
    <scope>NUCLEOTIDE SEQUENCE [LARGE SCALE MRNA]</scope>
    <source>
        <strain>Crossbred X Angus</strain>
        <tissue>Ileum</tissue>
    </source>
</reference>
<gene>
    <name type="primary">RPLP1</name>
</gene>
<accession>Q56K14</accession>
<keyword id="KW-0007">Acetylation</keyword>
<keyword id="KW-1017">Isopeptide bond</keyword>
<keyword id="KW-0597">Phosphoprotein</keyword>
<keyword id="KW-1185">Reference proteome</keyword>
<keyword id="KW-0687">Ribonucleoprotein</keyword>
<keyword id="KW-0689">Ribosomal protein</keyword>
<keyword id="KW-0832">Ubl conjugation</keyword>
<sequence length="114" mass="11514">MASVSELACIYSALILHDDEVTVTEDKINALIKAAGVNVEPFWPGLFAKALANVNIGSLICNVGAGGPAPAAGAAPAGGPAPSTAAAPAEEKKVEAKKEESEESDDDMGFGLFD</sequence>
<name>RLA1_BOVIN</name>
<evidence type="ECO:0000250" key="1"/>
<evidence type="ECO:0000250" key="2">
    <source>
        <dbReference type="UniProtKB" id="P05386"/>
    </source>
</evidence>
<evidence type="ECO:0000256" key="3">
    <source>
        <dbReference type="SAM" id="MobiDB-lite"/>
    </source>
</evidence>
<evidence type="ECO:0000305" key="4"/>
<organism>
    <name type="scientific">Bos taurus</name>
    <name type="common">Bovine</name>
    <dbReference type="NCBI Taxonomy" id="9913"/>
    <lineage>
        <taxon>Eukaryota</taxon>
        <taxon>Metazoa</taxon>
        <taxon>Chordata</taxon>
        <taxon>Craniata</taxon>
        <taxon>Vertebrata</taxon>
        <taxon>Euteleostomi</taxon>
        <taxon>Mammalia</taxon>
        <taxon>Eutheria</taxon>
        <taxon>Laurasiatheria</taxon>
        <taxon>Artiodactyla</taxon>
        <taxon>Ruminantia</taxon>
        <taxon>Pecora</taxon>
        <taxon>Bovidae</taxon>
        <taxon>Bovinae</taxon>
        <taxon>Bos</taxon>
    </lineage>
</organism>
<proteinExistence type="inferred from homology"/>
<protein>
    <recommendedName>
        <fullName evidence="4">Large ribosomal subunit protein P1</fullName>
    </recommendedName>
    <alternativeName>
        <fullName>60S acidic ribosomal protein P1</fullName>
    </alternativeName>
</protein>
<comment type="function">
    <text evidence="1">Plays an important role in the elongation step of protein synthesis.</text>
</comment>
<comment type="subunit">
    <text evidence="1">Heterodimer with RPLP2 at the lateral ribosomal stalk of the large ribosomal subunit.</text>
</comment>
<comment type="PTM">
    <text evidence="2">Ubiquitinated at Lys-92 and Lys-93 by RNF14 and RNF25 in response to ribosome collisions (ribosome stalling).</text>
</comment>
<comment type="similarity">
    <text evidence="4">Belongs to the eukaryotic ribosomal protein P1/P2 family.</text>
</comment>
<dbReference type="EMBL" id="AY911313">
    <property type="protein sequence ID" value="AAW82081.1"/>
    <property type="molecule type" value="mRNA"/>
</dbReference>
<dbReference type="EMBL" id="BC102695">
    <property type="protein sequence ID" value="AAI02696.1"/>
    <property type="molecule type" value="mRNA"/>
</dbReference>
<dbReference type="RefSeq" id="NP_001020511.1">
    <property type="nucleotide sequence ID" value="NM_001025340.2"/>
</dbReference>
<dbReference type="BMRB" id="Q56K14"/>
<dbReference type="SMR" id="Q56K14"/>
<dbReference type="FunCoup" id="Q56K14">
    <property type="interactions" value="1565"/>
</dbReference>
<dbReference type="IntAct" id="Q56K14">
    <property type="interactions" value="1"/>
</dbReference>
<dbReference type="STRING" id="9913.ENSBTAP00000024376"/>
<dbReference type="PaxDb" id="9913-ENSBTAP00000024376"/>
<dbReference type="PeptideAtlas" id="Q56K14"/>
<dbReference type="GeneID" id="533285"/>
<dbReference type="KEGG" id="bta:533285"/>
<dbReference type="CTD" id="6176"/>
<dbReference type="VEuPathDB" id="HostDB:ENSBTAG00000018320"/>
<dbReference type="eggNOG" id="KOG1762">
    <property type="taxonomic scope" value="Eukaryota"/>
</dbReference>
<dbReference type="HOGENOM" id="CLU_114656_1_2_1"/>
<dbReference type="InParanoid" id="Q56K14"/>
<dbReference type="OMA" id="REELMCV"/>
<dbReference type="OrthoDB" id="2194681at2759"/>
<dbReference type="TreeFam" id="TF312932"/>
<dbReference type="Reactome" id="R-BTA-156827">
    <property type="pathway name" value="L13a-mediated translational silencing of Ceruloplasmin expression"/>
</dbReference>
<dbReference type="Reactome" id="R-BTA-1799339">
    <property type="pathway name" value="SRP-dependent cotranslational protein targeting to membrane"/>
</dbReference>
<dbReference type="Reactome" id="R-BTA-6791226">
    <property type="pathway name" value="Major pathway of rRNA processing in the nucleolus and cytosol"/>
</dbReference>
<dbReference type="Reactome" id="R-BTA-72689">
    <property type="pathway name" value="Formation of a pool of free 40S subunits"/>
</dbReference>
<dbReference type="Reactome" id="R-BTA-72706">
    <property type="pathway name" value="GTP hydrolysis and joining of the 60S ribosomal subunit"/>
</dbReference>
<dbReference type="Reactome" id="R-BTA-975956">
    <property type="pathway name" value="Nonsense Mediated Decay (NMD) independent of the Exon Junction Complex (EJC)"/>
</dbReference>
<dbReference type="Reactome" id="R-BTA-975957">
    <property type="pathway name" value="Nonsense Mediated Decay (NMD) enhanced by the Exon Junction Complex (EJC)"/>
</dbReference>
<dbReference type="Proteomes" id="UP000009136">
    <property type="component" value="Chromosome 10"/>
</dbReference>
<dbReference type="Bgee" id="ENSBTAG00000018320">
    <property type="expression patterns" value="Expressed in uterine cervix and 106 other cell types or tissues"/>
</dbReference>
<dbReference type="GO" id="GO:0022625">
    <property type="term" value="C:cytosolic large ribosomal subunit"/>
    <property type="evidence" value="ECO:0000318"/>
    <property type="project" value="GO_Central"/>
</dbReference>
<dbReference type="GO" id="GO:0030295">
    <property type="term" value="F:protein kinase activator activity"/>
    <property type="evidence" value="ECO:0000318"/>
    <property type="project" value="GO_Central"/>
</dbReference>
<dbReference type="GO" id="GO:0043021">
    <property type="term" value="F:ribonucleoprotein complex binding"/>
    <property type="evidence" value="ECO:0000318"/>
    <property type="project" value="GO_Central"/>
</dbReference>
<dbReference type="GO" id="GO:0003735">
    <property type="term" value="F:structural constituent of ribosome"/>
    <property type="evidence" value="ECO:0000318"/>
    <property type="project" value="GO_Central"/>
</dbReference>
<dbReference type="GO" id="GO:0002181">
    <property type="term" value="P:cytoplasmic translation"/>
    <property type="evidence" value="ECO:0000318"/>
    <property type="project" value="GO_Central"/>
</dbReference>
<dbReference type="GO" id="GO:0006414">
    <property type="term" value="P:translational elongation"/>
    <property type="evidence" value="ECO:0007669"/>
    <property type="project" value="InterPro"/>
</dbReference>
<dbReference type="CDD" id="cd05831">
    <property type="entry name" value="Ribosomal_P1"/>
    <property type="match status" value="1"/>
</dbReference>
<dbReference type="FunFam" id="1.10.10.1410:FF:000001">
    <property type="entry name" value="60S acidic ribosomal protein P1"/>
    <property type="match status" value="1"/>
</dbReference>
<dbReference type="Gene3D" id="1.10.10.1410">
    <property type="match status" value="1"/>
</dbReference>
<dbReference type="HAMAP" id="MF_01478">
    <property type="entry name" value="Ribosomal_L12_arch"/>
    <property type="match status" value="1"/>
</dbReference>
<dbReference type="InterPro" id="IPR038716">
    <property type="entry name" value="P1/P2_N_sf"/>
</dbReference>
<dbReference type="InterPro" id="IPR027534">
    <property type="entry name" value="Ribosomal_P1/P2"/>
</dbReference>
<dbReference type="PANTHER" id="PTHR45696">
    <property type="entry name" value="60S ACIDIC RIBOSOMAL PROTEIN P1"/>
    <property type="match status" value="1"/>
</dbReference>
<dbReference type="PANTHER" id="PTHR45696:SF32">
    <property type="entry name" value="LARGE RIBOSOMAL SUBUNIT PROTEIN P1"/>
    <property type="match status" value="1"/>
</dbReference>
<dbReference type="Pfam" id="PF00428">
    <property type="entry name" value="Ribosomal_60s"/>
    <property type="match status" value="1"/>
</dbReference>